<feature type="chain" id="PRO_0000287504" description="Regulator of microtubule dynamics protein 2">
    <location>
        <begin position="1"/>
        <end position="410"/>
    </location>
</feature>
<feature type="transmembrane region" description="Helical" evidence="3">
    <location>
        <begin position="9"/>
        <end position="28"/>
    </location>
</feature>
<feature type="region of interest" description="Disordered" evidence="4">
    <location>
        <begin position="122"/>
        <end position="164"/>
    </location>
</feature>
<feature type="coiled-coil region" evidence="3">
    <location>
        <begin position="68"/>
        <end position="110"/>
    </location>
</feature>
<feature type="compositionally biased region" description="Basic residues" evidence="4">
    <location>
        <begin position="122"/>
        <end position="131"/>
    </location>
</feature>
<feature type="modified residue" description="Phosphoserine" evidence="2">
    <location>
        <position position="51"/>
    </location>
</feature>
<feature type="modified residue" description="Phosphoserine" evidence="1">
    <location>
        <position position="121"/>
    </location>
</feature>
<feature type="modified residue" description="Phosphothreonine" evidence="10">
    <location>
        <position position="139"/>
    </location>
</feature>
<feature type="modified residue" description="Phosphotyrosine" evidence="10">
    <location>
        <position position="152"/>
    </location>
</feature>
<feature type="modified residue" description="Phosphothreonine" evidence="10">
    <location>
        <position position="154"/>
    </location>
</feature>
<feature type="modified residue" description="Phosphothreonine" evidence="10">
    <location>
        <position position="157"/>
    </location>
</feature>
<feature type="splice variant" id="VSP_025524" description="In isoform 2." evidence="7">
    <original>MPYSTNKELILGIMVGTAGISLLLLWYHKVRKPGIAMKLPEFLSLGNTFNSITLQDEIHDDQGTTVIFQERQLQILEKLNELLTNMEELKEEIRFLKEAIPKLEEYIQDELGGKITVHKISPQHRARKRRLPTIQSSATSNSSEEAESEGG</original>
    <variation>MGKCLSCCKEDQSFQRCSPEDQVSTDAQHRGASSISQPSISLGHKTSYSPVTHKVNAAKASRRLLSVSSPSFSERRYSLFVGFQKRNASPYWQQSRANFDSEEDTGFTDIKSSSDHCGSFISRRRRFSSRKLSIVSYYKSAIFFDPQASGQNVFNLNEIEIFSKTSSNTDAKKHITISAPEYNTKNFKNFETNTTSPAFGNTIDTASYQQSTSSFFSLASDISSPDQQNGIANDIQQRGQLCKDLKDFLHPRPESYSTGHSPIMIPQHPSQSGTFPFLHKAGFSSSYKNSGCFIPPQSELTSGLFEDEDFAVLFQDEDRSSPIEIPKIR</variation>
    <location>
        <begin position="1"/>
        <end position="151"/>
    </location>
</feature>
<feature type="splice variant" id="VSP_025525" description="In isoform 3 and isoform 4." evidence="7 8">
    <original>MPYSTNKELILGIMVGTAGISLLLLWYHKVRKPGIAMKLPEFLSLGNTFNSITLQDEIHDDQGTTVIFQERQLQILEKLNELLTNMEELKEEIRFLKEAIPKLEEYIQDELGGKITVHKISPQHRARKRRLPTIQSSATSNSSEEAESEGG</original>
    <variation>MGKCLR</variation>
    <location>
        <begin position="1"/>
        <end position="151"/>
    </location>
</feature>
<feature type="splice variant" id="VSP_025526" description="In isoform 3." evidence="7">
    <original>AEELCPGYSNPNYMYLAKCYTDLEENQNALKFCNLALLLPTVTKEDKEAQKEMQKIMTSLKR</original>
    <variation>VHFVYPLF</variation>
    <location>
        <begin position="349"/>
        <end position="410"/>
    </location>
</feature>
<feature type="splice variant" id="VSP_025527" description="In isoform 2." evidence="7">
    <original>DKEAQKEMQKIMTSLKR</original>
    <variation>EL</variation>
    <location>
        <begin position="394"/>
        <end position="410"/>
    </location>
</feature>
<feature type="sequence variant" id="VAR_032316" description="In dbSNP:rs4670800." evidence="5">
    <original>G</original>
    <variation>D</variation>
    <location>
        <position position="259"/>
    </location>
</feature>
<feature type="sequence conflict" description="In Ref. 1; BAB71517." evidence="9" ref="1">
    <original>G</original>
    <variation>D</variation>
    <location sequence="Q96LZ7-2">
        <position position="259"/>
    </location>
</feature>
<proteinExistence type="evidence at protein level"/>
<gene>
    <name type="primary">RMDN2</name>
    <name type="synonym">FAM82A</name>
    <name type="synonym">FAM82A1</name>
    <name type="ORF">BLOCK18</name>
    <name type="ORF">UNQ9371/PRO34163</name>
</gene>
<organism>
    <name type="scientific">Homo sapiens</name>
    <name type="common">Human</name>
    <dbReference type="NCBI Taxonomy" id="9606"/>
    <lineage>
        <taxon>Eukaryota</taxon>
        <taxon>Metazoa</taxon>
        <taxon>Chordata</taxon>
        <taxon>Craniata</taxon>
        <taxon>Vertebrata</taxon>
        <taxon>Euteleostomi</taxon>
        <taxon>Mammalia</taxon>
        <taxon>Eutheria</taxon>
        <taxon>Euarchontoglires</taxon>
        <taxon>Primates</taxon>
        <taxon>Haplorrhini</taxon>
        <taxon>Catarrhini</taxon>
        <taxon>Hominidae</taxon>
        <taxon>Homo</taxon>
    </lineage>
</organism>
<dbReference type="EMBL" id="AK057516">
    <property type="protein sequence ID" value="BAB71517.1"/>
    <property type="molecule type" value="mRNA"/>
</dbReference>
<dbReference type="EMBL" id="AK095462">
    <property type="protein sequence ID" value="BAC04551.1"/>
    <property type="molecule type" value="mRNA"/>
</dbReference>
<dbReference type="EMBL" id="AY358269">
    <property type="protein sequence ID" value="AAQ88636.1"/>
    <property type="molecule type" value="mRNA"/>
</dbReference>
<dbReference type="EMBL" id="AF435956">
    <property type="protein sequence ID" value="AAM20907.1"/>
    <property type="molecule type" value="mRNA"/>
</dbReference>
<dbReference type="EMBL" id="AC009229">
    <property type="status" value="NOT_ANNOTATED_CDS"/>
    <property type="molecule type" value="Genomic_DNA"/>
</dbReference>
<dbReference type="EMBL" id="AC016689">
    <property type="protein sequence ID" value="AAX88865.1"/>
    <property type="molecule type" value="Genomic_DNA"/>
</dbReference>
<dbReference type="EMBL" id="CH471053">
    <property type="protein sequence ID" value="EAX00385.1"/>
    <property type="molecule type" value="Genomic_DNA"/>
</dbReference>
<dbReference type="EMBL" id="CH471053">
    <property type="protein sequence ID" value="EAX00387.1"/>
    <property type="molecule type" value="Genomic_DNA"/>
</dbReference>
<dbReference type="EMBL" id="BC024243">
    <property type="protein sequence ID" value="AAH24243.3"/>
    <property type="molecule type" value="mRNA"/>
</dbReference>
<dbReference type="EMBL" id="AH011736">
    <property type="protein sequence ID" value="AAM81211.1"/>
    <property type="status" value="ALT_SEQ"/>
    <property type="molecule type" value="Genomic_DNA"/>
</dbReference>
<dbReference type="EMBL" id="BR000689">
    <property type="protein sequence ID" value="FAA00414.1"/>
    <property type="molecule type" value="mRNA"/>
</dbReference>
<dbReference type="EMBL" id="BR000692">
    <property type="protein sequence ID" value="FAA00417.1"/>
    <property type="molecule type" value="mRNA"/>
</dbReference>
<dbReference type="CCDS" id="CCDS1792.1">
    <molecule id="Q96LZ7-2"/>
</dbReference>
<dbReference type="CCDS" id="CCDS54351.1">
    <molecule id="Q96LZ7-1"/>
</dbReference>
<dbReference type="CCDS" id="CCDS54352.1">
    <molecule id="Q96LZ7-4"/>
</dbReference>
<dbReference type="RefSeq" id="NP_001164262.1">
    <molecule id="Q96LZ7-1"/>
    <property type="nucleotide sequence ID" value="NM_001170791.3"/>
</dbReference>
<dbReference type="RefSeq" id="NP_001164263.1">
    <molecule id="Q96LZ7-1"/>
    <property type="nucleotide sequence ID" value="NM_001170792.3"/>
</dbReference>
<dbReference type="RefSeq" id="NP_001164264.1">
    <molecule id="Q96LZ7-4"/>
    <property type="nucleotide sequence ID" value="NM_001170793.3"/>
</dbReference>
<dbReference type="RefSeq" id="NP_001309140.1">
    <molecule id="Q96LZ7-1"/>
    <property type="nucleotide sequence ID" value="NM_001322211.2"/>
</dbReference>
<dbReference type="RefSeq" id="NP_653314.3">
    <property type="nucleotide sequence ID" value="NM_144713.4"/>
</dbReference>
<dbReference type="RefSeq" id="XP_016858964.1">
    <property type="nucleotide sequence ID" value="XM_017003475.1"/>
</dbReference>
<dbReference type="RefSeq" id="XP_047299474.1">
    <molecule id="Q96LZ7-1"/>
    <property type="nucleotide sequence ID" value="XM_047443518.1"/>
</dbReference>
<dbReference type="RefSeq" id="XP_047299476.1">
    <molecule id="Q96LZ7-4"/>
    <property type="nucleotide sequence ID" value="XM_047443520.1"/>
</dbReference>
<dbReference type="RefSeq" id="XP_054196773.1">
    <molecule id="Q96LZ7-1"/>
    <property type="nucleotide sequence ID" value="XM_054340798.1"/>
</dbReference>
<dbReference type="RefSeq" id="XP_054196774.1">
    <molecule id="Q96LZ7-1"/>
    <property type="nucleotide sequence ID" value="XM_054340799.1"/>
</dbReference>
<dbReference type="RefSeq" id="XP_054196775.1">
    <molecule id="Q96LZ7-4"/>
    <property type="nucleotide sequence ID" value="XM_054340800.1"/>
</dbReference>
<dbReference type="SMR" id="Q96LZ7"/>
<dbReference type="BioGRID" id="127373">
    <property type="interactions" value="35"/>
</dbReference>
<dbReference type="FunCoup" id="Q96LZ7">
    <property type="interactions" value="626"/>
</dbReference>
<dbReference type="IntAct" id="Q96LZ7">
    <property type="interactions" value="23"/>
</dbReference>
<dbReference type="STRING" id="9606.ENSP00000234195"/>
<dbReference type="GlyGen" id="Q96LZ7">
    <property type="glycosylation" value="1 site, 1 O-linked glycan (1 site)"/>
</dbReference>
<dbReference type="iPTMnet" id="Q96LZ7"/>
<dbReference type="PhosphoSitePlus" id="Q96LZ7"/>
<dbReference type="BioMuta" id="RMDN2"/>
<dbReference type="DMDM" id="147643051"/>
<dbReference type="jPOST" id="Q96LZ7"/>
<dbReference type="MassIVE" id="Q96LZ7"/>
<dbReference type="PaxDb" id="9606-ENSP00000234195"/>
<dbReference type="PeptideAtlas" id="Q96LZ7"/>
<dbReference type="ProteomicsDB" id="77272">
    <molecule id="Q96LZ7-1"/>
</dbReference>
<dbReference type="ProteomicsDB" id="77273">
    <molecule id="Q96LZ7-2"/>
</dbReference>
<dbReference type="ProteomicsDB" id="77274">
    <molecule id="Q96LZ7-3"/>
</dbReference>
<dbReference type="ProteomicsDB" id="77275">
    <molecule id="Q96LZ7-4"/>
</dbReference>
<dbReference type="Pumba" id="Q96LZ7"/>
<dbReference type="Antibodypedia" id="29456">
    <property type="antibodies" value="155 antibodies from 23 providers"/>
</dbReference>
<dbReference type="DNASU" id="151393"/>
<dbReference type="Ensembl" id="ENST00000354545.8">
    <molecule id="Q96LZ7-1"/>
    <property type="protein sequence ID" value="ENSP00000346549.3"/>
    <property type="gene ID" value="ENSG00000115841.21"/>
</dbReference>
<dbReference type="Ensembl" id="ENST00000406384.5">
    <molecule id="Q96LZ7-1"/>
    <property type="protein sequence ID" value="ENSP00000386004.1"/>
    <property type="gene ID" value="ENSG00000115841.21"/>
</dbReference>
<dbReference type="Ensembl" id="ENST00000417700.6">
    <molecule id="Q96LZ7-4"/>
    <property type="protein sequence ID" value="ENSP00000392977.2"/>
    <property type="gene ID" value="ENSG00000115841.21"/>
</dbReference>
<dbReference type="GeneID" id="151393"/>
<dbReference type="KEGG" id="hsa:151393"/>
<dbReference type="MANE-Select" id="ENST00000354545.8">
    <property type="protein sequence ID" value="ENSP00000346549.3"/>
    <property type="RefSeq nucleotide sequence ID" value="NM_001170791.3"/>
    <property type="RefSeq protein sequence ID" value="NP_001164262.1"/>
</dbReference>
<dbReference type="UCSC" id="uc002rql.4">
    <molecule id="Q96LZ7-1"/>
    <property type="organism name" value="human"/>
</dbReference>
<dbReference type="AGR" id="HGNC:26567"/>
<dbReference type="CTD" id="151393"/>
<dbReference type="DisGeNET" id="151393"/>
<dbReference type="GeneCards" id="RMDN2"/>
<dbReference type="HGNC" id="HGNC:26567">
    <property type="gene designation" value="RMDN2"/>
</dbReference>
<dbReference type="HPA" id="ENSG00000115841">
    <property type="expression patterns" value="Tissue enhanced (adrenal)"/>
</dbReference>
<dbReference type="MIM" id="611872">
    <property type="type" value="gene"/>
</dbReference>
<dbReference type="neXtProt" id="NX_Q96LZ7"/>
<dbReference type="OpenTargets" id="ENSG00000115841"/>
<dbReference type="PharmGKB" id="PA162387925"/>
<dbReference type="VEuPathDB" id="HostDB:ENSG00000115841"/>
<dbReference type="eggNOG" id="ENOG502QS2U">
    <property type="taxonomic scope" value="Eukaryota"/>
</dbReference>
<dbReference type="GeneTree" id="ENSGT00950000182992"/>
<dbReference type="HOGENOM" id="CLU_046369_0_0_1"/>
<dbReference type="InParanoid" id="Q96LZ7"/>
<dbReference type="OMA" id="KCAESHQ"/>
<dbReference type="OrthoDB" id="512473at2759"/>
<dbReference type="PAN-GO" id="Q96LZ7">
    <property type="GO annotations" value="5 GO annotations based on evolutionary models"/>
</dbReference>
<dbReference type="PhylomeDB" id="Q96LZ7"/>
<dbReference type="TreeFam" id="TF315854"/>
<dbReference type="PathwayCommons" id="Q96LZ7"/>
<dbReference type="SignaLink" id="Q96LZ7"/>
<dbReference type="BioGRID-ORCS" id="151393">
    <property type="hits" value="8 hits in 1149 CRISPR screens"/>
</dbReference>
<dbReference type="ChiTaRS" id="RMDN2">
    <property type="organism name" value="human"/>
</dbReference>
<dbReference type="GenomeRNAi" id="151393"/>
<dbReference type="Pharos" id="Q96LZ7">
    <property type="development level" value="Tbio"/>
</dbReference>
<dbReference type="PRO" id="PR:Q96LZ7"/>
<dbReference type="Proteomes" id="UP000005640">
    <property type="component" value="Chromosome 2"/>
</dbReference>
<dbReference type="RNAct" id="Q96LZ7">
    <property type="molecule type" value="protein"/>
</dbReference>
<dbReference type="Bgee" id="ENSG00000115841">
    <property type="expression patterns" value="Expressed in adrenal tissue and 135 other cell types or tissues"/>
</dbReference>
<dbReference type="ExpressionAtlas" id="Q96LZ7">
    <property type="expression patterns" value="baseline and differential"/>
</dbReference>
<dbReference type="GO" id="GO:0005737">
    <property type="term" value="C:cytoplasm"/>
    <property type="evidence" value="ECO:0000318"/>
    <property type="project" value="GO_Central"/>
</dbReference>
<dbReference type="GO" id="GO:0005829">
    <property type="term" value="C:cytosol"/>
    <property type="evidence" value="ECO:0000314"/>
    <property type="project" value="HPA"/>
</dbReference>
<dbReference type="GO" id="GO:0005794">
    <property type="term" value="C:Golgi apparatus"/>
    <property type="evidence" value="ECO:0000314"/>
    <property type="project" value="HPA"/>
</dbReference>
<dbReference type="GO" id="GO:0016020">
    <property type="term" value="C:membrane"/>
    <property type="evidence" value="ECO:0007669"/>
    <property type="project" value="UniProtKB-SubCell"/>
</dbReference>
<dbReference type="GO" id="GO:0005739">
    <property type="term" value="C:mitochondrion"/>
    <property type="evidence" value="ECO:0006056"/>
    <property type="project" value="FlyBase"/>
</dbReference>
<dbReference type="GO" id="GO:0072686">
    <property type="term" value="C:mitotic spindle"/>
    <property type="evidence" value="ECO:0000314"/>
    <property type="project" value="HPA"/>
</dbReference>
<dbReference type="GO" id="GO:0097431">
    <property type="term" value="C:mitotic spindle pole"/>
    <property type="evidence" value="ECO:0000314"/>
    <property type="project" value="UniProtKB"/>
</dbReference>
<dbReference type="GO" id="GO:0005876">
    <property type="term" value="C:spindle microtubule"/>
    <property type="evidence" value="ECO:0000314"/>
    <property type="project" value="UniProtKB"/>
</dbReference>
<dbReference type="GO" id="GO:0008017">
    <property type="term" value="F:microtubule binding"/>
    <property type="evidence" value="ECO:0000314"/>
    <property type="project" value="UniProtKB"/>
</dbReference>
<dbReference type="FunFam" id="1.25.40.10:FF:000536">
    <property type="entry name" value="Regulator of microtubule dynamics protein 2"/>
    <property type="match status" value="1"/>
</dbReference>
<dbReference type="Gene3D" id="1.25.40.10">
    <property type="entry name" value="Tetratricopeptide repeat domain"/>
    <property type="match status" value="1"/>
</dbReference>
<dbReference type="InterPro" id="IPR049039">
    <property type="entry name" value="RMD1-3_a_helical_rpt"/>
</dbReference>
<dbReference type="InterPro" id="IPR011990">
    <property type="entry name" value="TPR-like_helical_dom_sf"/>
</dbReference>
<dbReference type="PANTHER" id="PTHR16056">
    <property type="entry name" value="REGULATOR OF MICROTUBULE DYNAMICS PROTEIN"/>
    <property type="match status" value="1"/>
</dbReference>
<dbReference type="PANTHER" id="PTHR16056:SF15">
    <property type="entry name" value="REGULATOR OF MICROTUBULE DYNAMICS PROTEIN 2"/>
    <property type="match status" value="1"/>
</dbReference>
<dbReference type="Pfam" id="PF21033">
    <property type="entry name" value="RMD1-3"/>
    <property type="match status" value="1"/>
</dbReference>
<dbReference type="SUPFAM" id="SSF48452">
    <property type="entry name" value="TPR-like"/>
    <property type="match status" value="1"/>
</dbReference>
<name>RMD2_HUMAN</name>
<keyword id="KW-0025">Alternative splicing</keyword>
<keyword id="KW-0175">Coiled coil</keyword>
<keyword id="KW-0963">Cytoplasm</keyword>
<keyword id="KW-0206">Cytoskeleton</keyword>
<keyword id="KW-0472">Membrane</keyword>
<keyword id="KW-0493">Microtubule</keyword>
<keyword id="KW-0597">Phosphoprotein</keyword>
<keyword id="KW-1267">Proteomics identification</keyword>
<keyword id="KW-1185">Reference proteome</keyword>
<keyword id="KW-0812">Transmembrane</keyword>
<keyword id="KW-1133">Transmembrane helix</keyword>
<sequence>MPYSTNKELILGIMVGTAGISLLLLWYHKVRKPGIAMKLPEFLSLGNTFNSITLQDEIHDDQGTTVIFQERQLQILEKLNELLTNMEELKEEIRFLKEAIPKLEEYIQDELGGKITVHKISPQHRARKRRLPTIQSSATSNSSEEAESEGGYITANTDTEEQSFPVPKAFNTRVEELNLDVLLQKVDHLRMSESGKSESFELLRDHKEKFRDEIEFMWRFARAYGDMYELSTNTQEKKHYANIGKTLSERAINRAPMNGHCHLWYAVLCGYVSEFEGLQNKINYGHLFKEHLDIAIKLLPEEPFLYYLKGRYCYTVSKLSWIEKKMAATLFGKIPSSTVQEALHNFLKAEELCPGYSNPNYMYLAKCYTDLEENQNALKFCNLALLLPTVTKEDKEAQKEMQKIMTSLKR</sequence>
<evidence type="ECO:0000250" key="1">
    <source>
        <dbReference type="UniProtKB" id="Q498D5"/>
    </source>
</evidence>
<evidence type="ECO:0000250" key="2">
    <source>
        <dbReference type="UniProtKB" id="Q8BSE0"/>
    </source>
</evidence>
<evidence type="ECO:0000255" key="3"/>
<evidence type="ECO:0000256" key="4">
    <source>
        <dbReference type="SAM" id="MobiDB-lite"/>
    </source>
</evidence>
<evidence type="ECO:0000269" key="5">
    <source>
    </source>
</evidence>
<evidence type="ECO:0000269" key="6">
    <source>
    </source>
</evidence>
<evidence type="ECO:0000303" key="7">
    <source>
    </source>
</evidence>
<evidence type="ECO:0000303" key="8">
    <source ref="3"/>
</evidence>
<evidence type="ECO:0000305" key="9"/>
<evidence type="ECO:0007744" key="10">
    <source>
    </source>
</evidence>
<comment type="subunit">
    <text evidence="6">Interacts with microtubules.</text>
</comment>
<comment type="interaction">
    <interactant intactId="EBI-2806908">
        <id>Q96LZ7</id>
    </interactant>
    <interactant intactId="EBI-741181">
        <id>Q6RW13</id>
        <label>AGTRAP</label>
    </interactant>
    <organismsDiffer>false</organismsDiffer>
    <experiments>3</experiments>
</comment>
<comment type="interaction">
    <interactant intactId="EBI-2806908">
        <id>Q96LZ7</id>
    </interactant>
    <interactant intactId="EBI-11522760">
        <id>Q6RW13-2</id>
        <label>AGTRAP</label>
    </interactant>
    <organismsDiffer>false</organismsDiffer>
    <experiments>3</experiments>
</comment>
<comment type="interaction">
    <interactant intactId="EBI-2806908">
        <id>Q96LZ7</id>
    </interactant>
    <interactant intactId="EBI-2548702">
        <id>Q96DZ9</id>
        <label>CMTM5</label>
    </interactant>
    <organismsDiffer>false</organismsDiffer>
    <experiments>3</experiments>
</comment>
<comment type="interaction">
    <interactant intactId="EBI-2806908">
        <id>Q96LZ7</id>
    </interactant>
    <interactant intactId="EBI-11522780">
        <id>Q96DZ9-2</id>
        <label>CMTM5</label>
    </interactant>
    <organismsDiffer>false</organismsDiffer>
    <experiments>3</experiments>
</comment>
<comment type="interaction">
    <interactant intactId="EBI-2806908">
        <id>Q96LZ7</id>
    </interactant>
    <interactant intactId="EBI-517508">
        <id>Q9NR28</id>
        <label>DIABLO</label>
    </interactant>
    <organismsDiffer>false</organismsDiffer>
    <experiments>3</experiments>
</comment>
<comment type="interaction">
    <interactant intactId="EBI-2806908">
        <id>Q96LZ7</id>
    </interactant>
    <interactant intactId="EBI-1052304">
        <id>Q8NBQ5</id>
        <label>HSD17B11</label>
    </interactant>
    <organismsDiffer>false</organismsDiffer>
    <experiments>3</experiments>
</comment>
<comment type="interaction">
    <interactant intactId="EBI-2806908">
        <id>Q96LZ7</id>
    </interactant>
    <interactant intactId="EBI-11913715">
        <id>Q8IZV5</id>
        <label>RDH10</label>
    </interactant>
    <organismsDiffer>false</organismsDiffer>
    <experiments>3</experiments>
</comment>
<comment type="interaction">
    <interactant intactId="EBI-2806908">
        <id>Q96LZ7</id>
    </interactant>
    <interactant intactId="EBI-1056589">
        <id>Q96TC7</id>
        <label>RMDN3</label>
    </interactant>
    <organismsDiffer>false</organismsDiffer>
    <experiments>3</experiments>
</comment>
<comment type="interaction">
    <interactant intactId="EBI-2806908">
        <id>Q96LZ7</id>
    </interactant>
    <interactant intactId="EBI-11525735">
        <id>O95197-3</id>
        <label>RTN3</label>
    </interactant>
    <organismsDiffer>false</organismsDiffer>
    <experiments>3</experiments>
</comment>
<comment type="interaction">
    <interactant intactId="EBI-2806908">
        <id>Q96LZ7</id>
    </interactant>
    <interactant intactId="EBI-3920694">
        <id>Q9NR31</id>
        <label>SAR1A</label>
    </interactant>
    <organismsDiffer>false</organismsDiffer>
    <experiments>3</experiments>
</comment>
<comment type="interaction">
    <interactant intactId="EBI-2806908">
        <id>Q96LZ7</id>
    </interactant>
    <interactant intactId="EBI-712466">
        <id>Q16623</id>
        <label>STX1A</label>
    </interactant>
    <organismsDiffer>false</organismsDiffer>
    <experiments>3</experiments>
</comment>
<comment type="interaction">
    <interactant intactId="EBI-2806908">
        <id>Q96LZ7</id>
    </interactant>
    <interactant intactId="EBI-726691">
        <id>Q8WY91</id>
        <label>THAP4</label>
    </interactant>
    <organismsDiffer>false</organismsDiffer>
    <experiments>3</experiments>
</comment>
<comment type="interaction">
    <interactant intactId="EBI-2806908">
        <id>Q96LZ7</id>
    </interactant>
    <interactant intactId="EBI-1044859">
        <id>Q9UBN6</id>
        <label>TNFRSF10D</label>
    </interactant>
    <organismsDiffer>false</organismsDiffer>
    <experiments>3</experiments>
</comment>
<comment type="interaction">
    <interactant intactId="EBI-2806908">
        <id>Q96LZ7</id>
    </interactant>
    <interactant intactId="EBI-1059156">
        <id>Q9P0L0</id>
        <label>VAPA</label>
    </interactant>
    <organismsDiffer>false</organismsDiffer>
    <experiments>7</experiments>
</comment>
<comment type="interaction">
    <interactant intactId="EBI-2806908">
        <id>Q96LZ7</id>
    </interactant>
    <interactant intactId="EBI-1188298">
        <id>O95292</id>
        <label>VAPB</label>
    </interactant>
    <organismsDiffer>false</organismsDiffer>
    <experiments>8</experiments>
</comment>
<comment type="interaction">
    <interactant intactId="EBI-2806908">
        <id>Q96LZ7</id>
    </interactant>
    <interactant intactId="EBI-10178947">
        <id>Q53XM7</id>
        <label>VAPB</label>
    </interactant>
    <organismsDiffer>false</organismsDiffer>
    <experiments>3</experiments>
</comment>
<comment type="subcellular location">
    <subcellularLocation>
        <location evidence="9">Membrane</location>
        <topology evidence="9">Single-pass membrane protein</topology>
    </subcellularLocation>
    <subcellularLocation>
        <location evidence="6">Cytoplasm</location>
    </subcellularLocation>
    <subcellularLocation>
        <location evidence="6">Cytoplasm</location>
        <location evidence="6">Cytoskeleton</location>
        <location evidence="6">Spindle</location>
    </subcellularLocation>
    <subcellularLocation>
        <location evidence="6">Cytoplasm</location>
        <location evidence="6">Cytoskeleton</location>
        <location evidence="6">Spindle pole</location>
    </subcellularLocation>
    <text>In interphase localizes in the cytoplasm, and during mitosis localizes to the spindle microtubules and spindle poles. Also detected as large dots in the perinuclear region.</text>
</comment>
<comment type="alternative products">
    <event type="alternative splicing"/>
    <isoform>
        <id>Q96LZ7-1</id>
        <name>1</name>
        <sequence type="displayed"/>
    </isoform>
    <isoform>
        <id>Q96LZ7-2</id>
        <name>2</name>
        <sequence type="described" ref="VSP_025524 VSP_025527"/>
    </isoform>
    <isoform>
        <id>Q96LZ7-3</id>
        <name>3</name>
        <sequence type="described" ref="VSP_025525 VSP_025526"/>
    </isoform>
    <isoform>
        <id>Q96LZ7-4</id>
        <name>4</name>
        <sequence type="described" ref="VSP_025525"/>
    </isoform>
</comment>
<comment type="similarity">
    <text evidence="9">Belongs to the RMDN family.</text>
</comment>
<comment type="sequence caution" evidence="9">
    <conflict type="erroneous gene model prediction">
        <sequence resource="EMBL-CDS" id="AAM81211"/>
    </conflict>
</comment>
<reference key="1">
    <citation type="journal article" date="2004" name="Nat. Genet.">
        <title>Complete sequencing and characterization of 21,243 full-length human cDNAs.</title>
        <authorList>
            <person name="Ota T."/>
            <person name="Suzuki Y."/>
            <person name="Nishikawa T."/>
            <person name="Otsuki T."/>
            <person name="Sugiyama T."/>
            <person name="Irie R."/>
            <person name="Wakamatsu A."/>
            <person name="Hayashi K."/>
            <person name="Sato H."/>
            <person name="Nagai K."/>
            <person name="Kimura K."/>
            <person name="Makita H."/>
            <person name="Sekine M."/>
            <person name="Obayashi M."/>
            <person name="Nishi T."/>
            <person name="Shibahara T."/>
            <person name="Tanaka T."/>
            <person name="Ishii S."/>
            <person name="Yamamoto J."/>
            <person name="Saito K."/>
            <person name="Kawai Y."/>
            <person name="Isono Y."/>
            <person name="Nakamura Y."/>
            <person name="Nagahari K."/>
            <person name="Murakami K."/>
            <person name="Yasuda T."/>
            <person name="Iwayanagi T."/>
            <person name="Wagatsuma M."/>
            <person name="Shiratori A."/>
            <person name="Sudo H."/>
            <person name="Hosoiri T."/>
            <person name="Kaku Y."/>
            <person name="Kodaira H."/>
            <person name="Kondo H."/>
            <person name="Sugawara M."/>
            <person name="Takahashi M."/>
            <person name="Kanda K."/>
            <person name="Yokoi T."/>
            <person name="Furuya T."/>
            <person name="Kikkawa E."/>
            <person name="Omura Y."/>
            <person name="Abe K."/>
            <person name="Kamihara K."/>
            <person name="Katsuta N."/>
            <person name="Sato K."/>
            <person name="Tanikawa M."/>
            <person name="Yamazaki M."/>
            <person name="Ninomiya K."/>
            <person name="Ishibashi T."/>
            <person name="Yamashita H."/>
            <person name="Murakawa K."/>
            <person name="Fujimori K."/>
            <person name="Tanai H."/>
            <person name="Kimata M."/>
            <person name="Watanabe M."/>
            <person name="Hiraoka S."/>
            <person name="Chiba Y."/>
            <person name="Ishida S."/>
            <person name="Ono Y."/>
            <person name="Takiguchi S."/>
            <person name="Watanabe S."/>
            <person name="Yosida M."/>
            <person name="Hotuta T."/>
            <person name="Kusano J."/>
            <person name="Kanehori K."/>
            <person name="Takahashi-Fujii A."/>
            <person name="Hara H."/>
            <person name="Tanase T.-O."/>
            <person name="Nomura Y."/>
            <person name="Togiya S."/>
            <person name="Komai F."/>
            <person name="Hara R."/>
            <person name="Takeuchi K."/>
            <person name="Arita M."/>
            <person name="Imose N."/>
            <person name="Musashino K."/>
            <person name="Yuuki H."/>
            <person name="Oshima A."/>
            <person name="Sasaki N."/>
            <person name="Aotsuka S."/>
            <person name="Yoshikawa Y."/>
            <person name="Matsunawa H."/>
            <person name="Ichihara T."/>
            <person name="Shiohata N."/>
            <person name="Sano S."/>
            <person name="Moriya S."/>
            <person name="Momiyama H."/>
            <person name="Satoh N."/>
            <person name="Takami S."/>
            <person name="Terashima Y."/>
            <person name="Suzuki O."/>
            <person name="Nakagawa S."/>
            <person name="Senoh A."/>
            <person name="Mizoguchi H."/>
            <person name="Goto Y."/>
            <person name="Shimizu F."/>
            <person name="Wakebe H."/>
            <person name="Hishigaki H."/>
            <person name="Watanabe T."/>
            <person name="Sugiyama A."/>
            <person name="Takemoto M."/>
            <person name="Kawakami B."/>
            <person name="Yamazaki M."/>
            <person name="Watanabe K."/>
            <person name="Kumagai A."/>
            <person name="Itakura S."/>
            <person name="Fukuzumi Y."/>
            <person name="Fujimori Y."/>
            <person name="Komiyama M."/>
            <person name="Tashiro H."/>
            <person name="Tanigami A."/>
            <person name="Fujiwara T."/>
            <person name="Ono T."/>
            <person name="Yamada K."/>
            <person name="Fujii Y."/>
            <person name="Ozaki K."/>
            <person name="Hirao M."/>
            <person name="Ohmori Y."/>
            <person name="Kawabata A."/>
            <person name="Hikiji T."/>
            <person name="Kobatake N."/>
            <person name="Inagaki H."/>
            <person name="Ikema Y."/>
            <person name="Okamoto S."/>
            <person name="Okitani R."/>
            <person name="Kawakami T."/>
            <person name="Noguchi S."/>
            <person name="Itoh T."/>
            <person name="Shigeta K."/>
            <person name="Senba T."/>
            <person name="Matsumura K."/>
            <person name="Nakajima Y."/>
            <person name="Mizuno T."/>
            <person name="Morinaga M."/>
            <person name="Sasaki M."/>
            <person name="Togashi T."/>
            <person name="Oyama M."/>
            <person name="Hata H."/>
            <person name="Watanabe M."/>
            <person name="Komatsu T."/>
            <person name="Mizushima-Sugano J."/>
            <person name="Satoh T."/>
            <person name="Shirai Y."/>
            <person name="Takahashi Y."/>
            <person name="Nakagawa K."/>
            <person name="Okumura K."/>
            <person name="Nagase T."/>
            <person name="Nomura N."/>
            <person name="Kikuchi H."/>
            <person name="Masuho Y."/>
            <person name="Yamashita R."/>
            <person name="Nakai K."/>
            <person name="Yada T."/>
            <person name="Nakamura Y."/>
            <person name="Ohara O."/>
            <person name="Isogai T."/>
            <person name="Sugano S."/>
        </authorList>
    </citation>
    <scope>NUCLEOTIDE SEQUENCE [LARGE SCALE MRNA] (ISOFORMS 2 AND 3)</scope>
    <scope>VARIANT ASP-259</scope>
    <source>
        <tissue>Testis</tissue>
    </source>
</reference>
<reference key="2">
    <citation type="journal article" date="2003" name="Genome Res.">
        <title>The secreted protein discovery initiative (SPDI), a large-scale effort to identify novel human secreted and transmembrane proteins: a bioinformatics assessment.</title>
        <authorList>
            <person name="Clark H.F."/>
            <person name="Gurney A.L."/>
            <person name="Abaya E."/>
            <person name="Baker K."/>
            <person name="Baldwin D.T."/>
            <person name="Brush J."/>
            <person name="Chen J."/>
            <person name="Chow B."/>
            <person name="Chui C."/>
            <person name="Crowley C."/>
            <person name="Currell B."/>
            <person name="Deuel B."/>
            <person name="Dowd P."/>
            <person name="Eaton D."/>
            <person name="Foster J.S."/>
            <person name="Grimaldi C."/>
            <person name="Gu Q."/>
            <person name="Hass P.E."/>
            <person name="Heldens S."/>
            <person name="Huang A."/>
            <person name="Kim H.S."/>
            <person name="Klimowski L."/>
            <person name="Jin Y."/>
            <person name="Johnson S."/>
            <person name="Lee J."/>
            <person name="Lewis L."/>
            <person name="Liao D."/>
            <person name="Mark M.R."/>
            <person name="Robbie E."/>
            <person name="Sanchez C."/>
            <person name="Schoenfeld J."/>
            <person name="Seshagiri S."/>
            <person name="Simmons L."/>
            <person name="Singh J."/>
            <person name="Smith V."/>
            <person name="Stinson J."/>
            <person name="Vagts A."/>
            <person name="Vandlen R.L."/>
            <person name="Watanabe C."/>
            <person name="Wieand D."/>
            <person name="Woods K."/>
            <person name="Xie M.-H."/>
            <person name="Yansura D.G."/>
            <person name="Yi S."/>
            <person name="Yu G."/>
            <person name="Yuan J."/>
            <person name="Zhang M."/>
            <person name="Zhang Z."/>
            <person name="Goddard A.D."/>
            <person name="Wood W.I."/>
            <person name="Godowski P.J."/>
            <person name="Gray A.M."/>
        </authorList>
    </citation>
    <scope>NUCLEOTIDE SEQUENCE [LARGE SCALE MRNA] (ISOFORM 1)</scope>
</reference>
<reference key="3">
    <citation type="submission" date="2001-10" db="EMBL/GenBank/DDBJ databases">
        <authorList>
            <person name="Guo J.H."/>
            <person name="Yu L."/>
        </authorList>
    </citation>
    <scope>NUCLEOTIDE SEQUENCE [LARGE SCALE MRNA] (ISOFORM 4)</scope>
</reference>
<reference key="4">
    <citation type="journal article" date="2005" name="Nature">
        <title>Generation and annotation of the DNA sequences of human chromosomes 2 and 4.</title>
        <authorList>
            <person name="Hillier L.W."/>
            <person name="Graves T.A."/>
            <person name="Fulton R.S."/>
            <person name="Fulton L.A."/>
            <person name="Pepin K.H."/>
            <person name="Minx P."/>
            <person name="Wagner-McPherson C."/>
            <person name="Layman D."/>
            <person name="Wylie K."/>
            <person name="Sekhon M."/>
            <person name="Becker M.C."/>
            <person name="Fewell G.A."/>
            <person name="Delehaunty K.D."/>
            <person name="Miner T.L."/>
            <person name="Nash W.E."/>
            <person name="Kremitzki C."/>
            <person name="Oddy L."/>
            <person name="Du H."/>
            <person name="Sun H."/>
            <person name="Bradshaw-Cordum H."/>
            <person name="Ali J."/>
            <person name="Carter J."/>
            <person name="Cordes M."/>
            <person name="Harris A."/>
            <person name="Isak A."/>
            <person name="van Brunt A."/>
            <person name="Nguyen C."/>
            <person name="Du F."/>
            <person name="Courtney L."/>
            <person name="Kalicki J."/>
            <person name="Ozersky P."/>
            <person name="Abbott S."/>
            <person name="Armstrong J."/>
            <person name="Belter E.A."/>
            <person name="Caruso L."/>
            <person name="Cedroni M."/>
            <person name="Cotton M."/>
            <person name="Davidson T."/>
            <person name="Desai A."/>
            <person name="Elliott G."/>
            <person name="Erb T."/>
            <person name="Fronick C."/>
            <person name="Gaige T."/>
            <person name="Haakenson W."/>
            <person name="Haglund K."/>
            <person name="Holmes A."/>
            <person name="Harkins R."/>
            <person name="Kim K."/>
            <person name="Kruchowski S.S."/>
            <person name="Strong C.M."/>
            <person name="Grewal N."/>
            <person name="Goyea E."/>
            <person name="Hou S."/>
            <person name="Levy A."/>
            <person name="Martinka S."/>
            <person name="Mead K."/>
            <person name="McLellan M.D."/>
            <person name="Meyer R."/>
            <person name="Randall-Maher J."/>
            <person name="Tomlinson C."/>
            <person name="Dauphin-Kohlberg S."/>
            <person name="Kozlowicz-Reilly A."/>
            <person name="Shah N."/>
            <person name="Swearengen-Shahid S."/>
            <person name="Snider J."/>
            <person name="Strong J.T."/>
            <person name="Thompson J."/>
            <person name="Yoakum M."/>
            <person name="Leonard S."/>
            <person name="Pearman C."/>
            <person name="Trani L."/>
            <person name="Radionenko M."/>
            <person name="Waligorski J.E."/>
            <person name="Wang C."/>
            <person name="Rock S.M."/>
            <person name="Tin-Wollam A.-M."/>
            <person name="Maupin R."/>
            <person name="Latreille P."/>
            <person name="Wendl M.C."/>
            <person name="Yang S.-P."/>
            <person name="Pohl C."/>
            <person name="Wallis J.W."/>
            <person name="Spieth J."/>
            <person name="Bieri T.A."/>
            <person name="Berkowicz N."/>
            <person name="Nelson J.O."/>
            <person name="Osborne J."/>
            <person name="Ding L."/>
            <person name="Meyer R."/>
            <person name="Sabo A."/>
            <person name="Shotland Y."/>
            <person name="Sinha P."/>
            <person name="Wohldmann P.E."/>
            <person name="Cook L.L."/>
            <person name="Hickenbotham M.T."/>
            <person name="Eldred J."/>
            <person name="Williams D."/>
            <person name="Jones T.A."/>
            <person name="She X."/>
            <person name="Ciccarelli F.D."/>
            <person name="Izaurralde E."/>
            <person name="Taylor J."/>
            <person name="Schmutz J."/>
            <person name="Myers R.M."/>
            <person name="Cox D.R."/>
            <person name="Huang X."/>
            <person name="McPherson J.D."/>
            <person name="Mardis E.R."/>
            <person name="Clifton S.W."/>
            <person name="Warren W.C."/>
            <person name="Chinwalla A.T."/>
            <person name="Eddy S.R."/>
            <person name="Marra M.A."/>
            <person name="Ovcharenko I."/>
            <person name="Furey T.S."/>
            <person name="Miller W."/>
            <person name="Eichler E.E."/>
            <person name="Bork P."/>
            <person name="Suyama M."/>
            <person name="Torrents D."/>
            <person name="Waterston R.H."/>
            <person name="Wilson R.K."/>
        </authorList>
    </citation>
    <scope>NUCLEOTIDE SEQUENCE [LARGE SCALE GENOMIC DNA]</scope>
</reference>
<reference key="5">
    <citation type="submission" date="2005-09" db="EMBL/GenBank/DDBJ databases">
        <authorList>
            <person name="Mural R.J."/>
            <person name="Istrail S."/>
            <person name="Sutton G.G."/>
            <person name="Florea L."/>
            <person name="Halpern A.L."/>
            <person name="Mobarry C.M."/>
            <person name="Lippert R."/>
            <person name="Walenz B."/>
            <person name="Shatkay H."/>
            <person name="Dew I."/>
            <person name="Miller J.R."/>
            <person name="Flanigan M.J."/>
            <person name="Edwards N.J."/>
            <person name="Bolanos R."/>
            <person name="Fasulo D."/>
            <person name="Halldorsson B.V."/>
            <person name="Hannenhalli S."/>
            <person name="Turner R."/>
            <person name="Yooseph S."/>
            <person name="Lu F."/>
            <person name="Nusskern D.R."/>
            <person name="Shue B.C."/>
            <person name="Zheng X.H."/>
            <person name="Zhong F."/>
            <person name="Delcher A.L."/>
            <person name="Huson D.H."/>
            <person name="Kravitz S.A."/>
            <person name="Mouchard L."/>
            <person name="Reinert K."/>
            <person name="Remington K.A."/>
            <person name="Clark A.G."/>
            <person name="Waterman M.S."/>
            <person name="Eichler E.E."/>
            <person name="Adams M.D."/>
            <person name="Hunkapiller M.W."/>
            <person name="Myers E.W."/>
            <person name="Venter J.C."/>
        </authorList>
    </citation>
    <scope>NUCLEOTIDE SEQUENCE [LARGE SCALE GENOMIC DNA]</scope>
</reference>
<reference key="6">
    <citation type="journal article" date="2004" name="Genome Res.">
        <title>The status, quality, and expansion of the NIH full-length cDNA project: the Mammalian Gene Collection (MGC).</title>
        <authorList>
            <consortium name="The MGC Project Team"/>
        </authorList>
    </citation>
    <scope>NUCLEOTIDE SEQUENCE [LARGE SCALE MRNA] (ISOFORM 1)</scope>
    <source>
        <tissue>Brain</tissue>
    </source>
</reference>
<reference key="7">
    <citation type="submission" date="2001-11" db="EMBL/GenBank/DDBJ databases">
        <title>Physical/genetic map of the 2p22-2p21 region on chromosome 2.</title>
        <authorList>
            <person name="Gorry M.C."/>
            <person name="Zhang Y."/>
            <person name="Marks J.J."/>
            <person name="Suppe B."/>
            <person name="Hart P.S."/>
            <person name="Cortelli J.R."/>
            <person name="Pallos D."/>
            <person name="Hart T.C."/>
        </authorList>
    </citation>
    <scope>NUCLEOTIDE SEQUENCE [GENOMIC DNA] OF 152-410</scope>
</reference>
<reference key="8">
    <citation type="journal article" date="2007" name="J. Cell Biol.">
        <title>RMD-1, a novel microtubule-associated protein, functions in chromosome segregation in Caenorhabditis elegans.</title>
        <authorList>
            <person name="Oishi K."/>
            <person name="Okano H."/>
            <person name="Sawa H."/>
        </authorList>
    </citation>
    <scope>IDENTIFICATION (ISOFORM 1)</scope>
    <scope>INTERACTION WITH MICROTUBULES</scope>
    <scope>SUBCELLULAR LOCATION</scope>
</reference>
<reference key="9">
    <citation type="journal article" date="2014" name="J. Proteomics">
        <title>An enzyme assisted RP-RPLC approach for in-depth analysis of human liver phosphoproteome.</title>
        <authorList>
            <person name="Bian Y."/>
            <person name="Song C."/>
            <person name="Cheng K."/>
            <person name="Dong M."/>
            <person name="Wang F."/>
            <person name="Huang J."/>
            <person name="Sun D."/>
            <person name="Wang L."/>
            <person name="Ye M."/>
            <person name="Zou H."/>
        </authorList>
    </citation>
    <scope>PHOSPHORYLATION [LARGE SCALE ANALYSIS] AT THR-139; TYR-152; THR-154 AND THR-157</scope>
    <scope>IDENTIFICATION BY MASS SPECTROMETRY [LARGE SCALE ANALYSIS]</scope>
    <source>
        <tissue>Liver</tissue>
    </source>
</reference>
<accession>Q96LZ7</accession>
<accession>A9UMZ7</accession>
<accession>A9UN00</accession>
<accession>Q4ZG33</accession>
<accession>Q6UXN4</accession>
<accession>Q8N657</accession>
<accession>Q8N9A2</accession>
<accession>Q8NCV6</accession>
<accession>Q8NHM0</accession>
<protein>
    <recommendedName>
        <fullName>Regulator of microtubule dynamics protein 2</fullName>
        <shortName>RMD-2</shortName>
        <shortName>hRMD-2</shortName>
    </recommendedName>
    <alternativeName>
        <fullName>Protein FAM82A1</fullName>
    </alternativeName>
</protein>